<reference key="1">
    <citation type="journal article" date="2004" name="Genome Res.">
        <title>Developmental roles of pufferfish Hox clusters and genome evolution in ray-fin fish.</title>
        <authorList>
            <person name="Amores A."/>
            <person name="Suzuki T."/>
            <person name="Yan Y.-L."/>
            <person name="Pomeroy J."/>
            <person name="Singer A."/>
            <person name="Amemiya C."/>
            <person name="Postlethwait J.H."/>
        </authorList>
    </citation>
    <scope>NUCLEOTIDE SEQUENCE [GENOMIC DNA]</scope>
</reference>
<reference key="2">
    <citation type="journal article" date="2013" name="Nature">
        <title>The zebrafish reference genome sequence and its relationship to the human genome.</title>
        <authorList>
            <person name="Howe K."/>
            <person name="Clark M.D."/>
            <person name="Torroja C.F."/>
            <person name="Torrance J."/>
            <person name="Berthelot C."/>
            <person name="Muffato M."/>
            <person name="Collins J.E."/>
            <person name="Humphray S."/>
            <person name="McLaren K."/>
            <person name="Matthews L."/>
            <person name="McLaren S."/>
            <person name="Sealy I."/>
            <person name="Caccamo M."/>
            <person name="Churcher C."/>
            <person name="Scott C."/>
            <person name="Barrett J.C."/>
            <person name="Koch R."/>
            <person name="Rauch G.J."/>
            <person name="White S."/>
            <person name="Chow W."/>
            <person name="Kilian B."/>
            <person name="Quintais L.T."/>
            <person name="Guerra-Assuncao J.A."/>
            <person name="Zhou Y."/>
            <person name="Gu Y."/>
            <person name="Yen J."/>
            <person name="Vogel J.H."/>
            <person name="Eyre T."/>
            <person name="Redmond S."/>
            <person name="Banerjee R."/>
            <person name="Chi J."/>
            <person name="Fu B."/>
            <person name="Langley E."/>
            <person name="Maguire S.F."/>
            <person name="Laird G.K."/>
            <person name="Lloyd D."/>
            <person name="Kenyon E."/>
            <person name="Donaldson S."/>
            <person name="Sehra H."/>
            <person name="Almeida-King J."/>
            <person name="Loveland J."/>
            <person name="Trevanion S."/>
            <person name="Jones M."/>
            <person name="Quail M."/>
            <person name="Willey D."/>
            <person name="Hunt A."/>
            <person name="Burton J."/>
            <person name="Sims S."/>
            <person name="McLay K."/>
            <person name="Plumb B."/>
            <person name="Davis J."/>
            <person name="Clee C."/>
            <person name="Oliver K."/>
            <person name="Clark R."/>
            <person name="Riddle C."/>
            <person name="Elliot D."/>
            <person name="Threadgold G."/>
            <person name="Harden G."/>
            <person name="Ware D."/>
            <person name="Begum S."/>
            <person name="Mortimore B."/>
            <person name="Kerry G."/>
            <person name="Heath P."/>
            <person name="Phillimore B."/>
            <person name="Tracey A."/>
            <person name="Corby N."/>
            <person name="Dunn M."/>
            <person name="Johnson C."/>
            <person name="Wood J."/>
            <person name="Clark S."/>
            <person name="Pelan S."/>
            <person name="Griffiths G."/>
            <person name="Smith M."/>
            <person name="Glithero R."/>
            <person name="Howden P."/>
            <person name="Barker N."/>
            <person name="Lloyd C."/>
            <person name="Stevens C."/>
            <person name="Harley J."/>
            <person name="Holt K."/>
            <person name="Panagiotidis G."/>
            <person name="Lovell J."/>
            <person name="Beasley H."/>
            <person name="Henderson C."/>
            <person name="Gordon D."/>
            <person name="Auger K."/>
            <person name="Wright D."/>
            <person name="Collins J."/>
            <person name="Raisen C."/>
            <person name="Dyer L."/>
            <person name="Leung K."/>
            <person name="Robertson L."/>
            <person name="Ambridge K."/>
            <person name="Leongamornlert D."/>
            <person name="McGuire S."/>
            <person name="Gilderthorp R."/>
            <person name="Griffiths C."/>
            <person name="Manthravadi D."/>
            <person name="Nichol S."/>
            <person name="Barker G."/>
            <person name="Whitehead S."/>
            <person name="Kay M."/>
            <person name="Brown J."/>
            <person name="Murnane C."/>
            <person name="Gray E."/>
            <person name="Humphries M."/>
            <person name="Sycamore N."/>
            <person name="Barker D."/>
            <person name="Saunders D."/>
            <person name="Wallis J."/>
            <person name="Babbage A."/>
            <person name="Hammond S."/>
            <person name="Mashreghi-Mohammadi M."/>
            <person name="Barr L."/>
            <person name="Martin S."/>
            <person name="Wray P."/>
            <person name="Ellington A."/>
            <person name="Matthews N."/>
            <person name="Ellwood M."/>
            <person name="Woodmansey R."/>
            <person name="Clark G."/>
            <person name="Cooper J."/>
            <person name="Tromans A."/>
            <person name="Grafham D."/>
            <person name="Skuce C."/>
            <person name="Pandian R."/>
            <person name="Andrews R."/>
            <person name="Harrison E."/>
            <person name="Kimberley A."/>
            <person name="Garnett J."/>
            <person name="Fosker N."/>
            <person name="Hall R."/>
            <person name="Garner P."/>
            <person name="Kelly D."/>
            <person name="Bird C."/>
            <person name="Palmer S."/>
            <person name="Gehring I."/>
            <person name="Berger A."/>
            <person name="Dooley C.M."/>
            <person name="Ersan-Urun Z."/>
            <person name="Eser C."/>
            <person name="Geiger H."/>
            <person name="Geisler M."/>
            <person name="Karotki L."/>
            <person name="Kirn A."/>
            <person name="Konantz J."/>
            <person name="Konantz M."/>
            <person name="Oberlander M."/>
            <person name="Rudolph-Geiger S."/>
            <person name="Teucke M."/>
            <person name="Lanz C."/>
            <person name="Raddatz G."/>
            <person name="Osoegawa K."/>
            <person name="Zhu B."/>
            <person name="Rapp A."/>
            <person name="Widaa S."/>
            <person name="Langford C."/>
            <person name="Yang F."/>
            <person name="Schuster S.C."/>
            <person name="Carter N.P."/>
            <person name="Harrow J."/>
            <person name="Ning Z."/>
            <person name="Herrero J."/>
            <person name="Searle S.M."/>
            <person name="Enright A."/>
            <person name="Geisler R."/>
            <person name="Plasterk R.H."/>
            <person name="Lee C."/>
            <person name="Westerfield M."/>
            <person name="de Jong P.J."/>
            <person name="Zon L.I."/>
            <person name="Postlethwait J.H."/>
            <person name="Nusslein-Volhard C."/>
            <person name="Hubbard T.J."/>
            <person name="Roest Crollius H."/>
            <person name="Rogers J."/>
            <person name="Stemple D.L."/>
        </authorList>
    </citation>
    <scope>NUCLEOTIDE SEQUENCE [LARGE SCALE GENOMIC DNA]</scope>
    <source>
        <strain>Tuebingen</strain>
    </source>
</reference>
<reference key="3">
    <citation type="journal article" date="1998" name="Science">
        <title>Zebrafish hox clusters and vertebrate genome evolution.</title>
        <authorList>
            <person name="Amores A."/>
            <person name="Force A."/>
            <person name="Yan Y.-L."/>
            <person name="Joly L."/>
            <person name="Amemiya C."/>
            <person name="Fritz A."/>
            <person name="Ho R.K."/>
            <person name="Langeland J."/>
            <person name="Prince V.E."/>
            <person name="Wang Y.-L."/>
            <person name="Westerfield M."/>
            <person name="Ekker M."/>
            <person name="Postlethwait J.H."/>
        </authorList>
    </citation>
    <scope>NUCLEOTIDE SEQUENCE [GENOMIC DNA] OF 244-310</scope>
</reference>
<sequence>MTTSLLLRPRWIDPVMFLYDNGGGLDDTSKNMEGFTGGNFSPSPCRNLMSHPASLAPSATYPSSEVAAAAAGDSGKQCSPCSAVQGSASASISYGYFGGGGYYPCRMSHHHGSGGGVKTCAQSPASGSPYGEKYMDTSASTGEDYTSSRAKEFALYSSYASSPYQPVPSYLDVPVVQAISGPSEPRHESLLPMESYQPWAITTSGWNGQVYCTKEQQQTGNVWKSSIPESVSHGGADGSSFRRGRKKRVPYTKVQLKELEREYATNKFITKDKRRRISAQTNLSERQVTIWFQNRRVKEKKVVNKLKSSS</sequence>
<feature type="chain" id="PRO_0000200104" description="Homeobox protein Hox-A13a">
    <location>
        <begin position="1"/>
        <end position="310"/>
    </location>
</feature>
<feature type="DNA-binding region" description="Homeobox" evidence="2">
    <location>
        <begin position="244"/>
        <end position="303"/>
    </location>
</feature>
<feature type="sequence conflict" description="In Ref. 1; AAQ72839." evidence="3" ref="1">
    <original>S</original>
    <variation>W</variation>
    <location>
        <position position="183"/>
    </location>
</feature>
<accession>Q6W990</accession>
<accession>Q1L974</accession>
<accession>Q9YGT9</accession>
<evidence type="ECO:0000250" key="1"/>
<evidence type="ECO:0000255" key="2">
    <source>
        <dbReference type="PROSITE-ProRule" id="PRU00108"/>
    </source>
</evidence>
<evidence type="ECO:0000305" key="3"/>
<protein>
    <recommendedName>
        <fullName>Homeobox protein Hox-A13a</fullName>
    </recommendedName>
</protein>
<dbReference type="EMBL" id="AY303229">
    <property type="protein sequence ID" value="AAQ72839.1"/>
    <property type="molecule type" value="Genomic_DNA"/>
</dbReference>
<dbReference type="EMBL" id="CR382300">
    <property type="protein sequence ID" value="CAK10846.1"/>
    <property type="molecule type" value="Genomic_DNA"/>
</dbReference>
<dbReference type="EMBL" id="AF071241">
    <property type="protein sequence ID" value="AAD15935.1"/>
    <property type="molecule type" value="Genomic_DNA"/>
</dbReference>
<dbReference type="RefSeq" id="NP_001078963.1">
    <property type="nucleotide sequence ID" value="NM_001085494.1"/>
</dbReference>
<dbReference type="SMR" id="Q6W990"/>
<dbReference type="FunCoup" id="Q6W990">
    <property type="interactions" value="6"/>
</dbReference>
<dbReference type="STRING" id="7955.ENSDARP00000135830"/>
<dbReference type="PaxDb" id="7955-ENSDARP00000003928"/>
<dbReference type="Ensembl" id="ENSDART00000171610">
    <property type="protein sequence ID" value="ENSDARP00000135830"/>
    <property type="gene ID" value="ENSDARG00000100312"/>
</dbReference>
<dbReference type="GeneID" id="570239"/>
<dbReference type="KEGG" id="dre:570239"/>
<dbReference type="AGR" id="ZFIN:ZDB-GENE-990415-5"/>
<dbReference type="CTD" id="570239"/>
<dbReference type="ZFIN" id="ZDB-GENE-990415-5">
    <property type="gene designation" value="hoxa13a"/>
</dbReference>
<dbReference type="eggNOG" id="KOG0487">
    <property type="taxonomic scope" value="Eukaryota"/>
</dbReference>
<dbReference type="HOGENOM" id="CLU_059940_1_0_1"/>
<dbReference type="InParanoid" id="Q6W990"/>
<dbReference type="OMA" id="KSCAQHA"/>
<dbReference type="OrthoDB" id="6159439at2759"/>
<dbReference type="PhylomeDB" id="Q6W990"/>
<dbReference type="TreeFam" id="TF330813"/>
<dbReference type="PRO" id="PR:Q6W990"/>
<dbReference type="Proteomes" id="UP000000437">
    <property type="component" value="Chromosome 19"/>
</dbReference>
<dbReference type="Bgee" id="ENSDARG00000100312">
    <property type="expression patterns" value="Expressed in mesenchyme pectoral fin and 12 other cell types or tissues"/>
</dbReference>
<dbReference type="ExpressionAtlas" id="Q6W990">
    <property type="expression patterns" value="baseline"/>
</dbReference>
<dbReference type="GO" id="GO:0005634">
    <property type="term" value="C:nucleus"/>
    <property type="evidence" value="ECO:0007669"/>
    <property type="project" value="UniProtKB-SubCell"/>
</dbReference>
<dbReference type="GO" id="GO:0000981">
    <property type="term" value="F:DNA-binding transcription factor activity, RNA polymerase II-specific"/>
    <property type="evidence" value="ECO:0000314"/>
    <property type="project" value="ZFIN"/>
</dbReference>
<dbReference type="GO" id="GO:0000978">
    <property type="term" value="F:RNA polymerase II cis-regulatory region sequence-specific DNA binding"/>
    <property type="evidence" value="ECO:0000318"/>
    <property type="project" value="GO_Central"/>
</dbReference>
<dbReference type="GO" id="GO:0033333">
    <property type="term" value="P:fin development"/>
    <property type="evidence" value="ECO:0000315"/>
    <property type="project" value="ZFIN"/>
</dbReference>
<dbReference type="GO" id="GO:0000122">
    <property type="term" value="P:negative regulation of transcription by RNA polymerase II"/>
    <property type="evidence" value="ECO:0000314"/>
    <property type="project" value="ZFIN"/>
</dbReference>
<dbReference type="GO" id="GO:0006357">
    <property type="term" value="P:regulation of transcription by RNA polymerase II"/>
    <property type="evidence" value="ECO:0000318"/>
    <property type="project" value="GO_Central"/>
</dbReference>
<dbReference type="CDD" id="cd00086">
    <property type="entry name" value="homeodomain"/>
    <property type="match status" value="1"/>
</dbReference>
<dbReference type="FunFam" id="1.10.10.60:FF:000084">
    <property type="entry name" value="Homeobox protein Hox-D13"/>
    <property type="match status" value="1"/>
</dbReference>
<dbReference type="Gene3D" id="1.10.10.60">
    <property type="entry name" value="Homeodomain-like"/>
    <property type="match status" value="1"/>
</dbReference>
<dbReference type="InterPro" id="IPR051003">
    <property type="entry name" value="AP_axis_regulatory_Homeobox"/>
</dbReference>
<dbReference type="InterPro" id="IPR001356">
    <property type="entry name" value="HD"/>
</dbReference>
<dbReference type="InterPro" id="IPR017970">
    <property type="entry name" value="Homeobox_CS"/>
</dbReference>
<dbReference type="InterPro" id="IPR009057">
    <property type="entry name" value="Homeodomain-like_sf"/>
</dbReference>
<dbReference type="InterPro" id="IPR022067">
    <property type="entry name" value="HoxA13_N"/>
</dbReference>
<dbReference type="PANTHER" id="PTHR45804:SF9">
    <property type="entry name" value="HOMEOBOX PROTEIN HOX-A13A-RELATED"/>
    <property type="match status" value="1"/>
</dbReference>
<dbReference type="PANTHER" id="PTHR45804">
    <property type="entry name" value="SEGMENTATION PROTEIN FUSHI TARAZU-LIKE PROTEIN"/>
    <property type="match status" value="1"/>
</dbReference>
<dbReference type="Pfam" id="PF00046">
    <property type="entry name" value="Homeodomain"/>
    <property type="match status" value="1"/>
</dbReference>
<dbReference type="Pfam" id="PF12284">
    <property type="entry name" value="HoxA13_N"/>
    <property type="match status" value="1"/>
</dbReference>
<dbReference type="SMART" id="SM00389">
    <property type="entry name" value="HOX"/>
    <property type="match status" value="1"/>
</dbReference>
<dbReference type="SUPFAM" id="SSF46689">
    <property type="entry name" value="Homeodomain-like"/>
    <property type="match status" value="1"/>
</dbReference>
<dbReference type="PROSITE" id="PS00027">
    <property type="entry name" value="HOMEOBOX_1"/>
    <property type="match status" value="1"/>
</dbReference>
<dbReference type="PROSITE" id="PS50071">
    <property type="entry name" value="HOMEOBOX_2"/>
    <property type="match status" value="1"/>
</dbReference>
<name>HXADA_DANRE</name>
<organism>
    <name type="scientific">Danio rerio</name>
    <name type="common">Zebrafish</name>
    <name type="synonym">Brachydanio rerio</name>
    <dbReference type="NCBI Taxonomy" id="7955"/>
    <lineage>
        <taxon>Eukaryota</taxon>
        <taxon>Metazoa</taxon>
        <taxon>Chordata</taxon>
        <taxon>Craniata</taxon>
        <taxon>Vertebrata</taxon>
        <taxon>Euteleostomi</taxon>
        <taxon>Actinopterygii</taxon>
        <taxon>Neopterygii</taxon>
        <taxon>Teleostei</taxon>
        <taxon>Ostariophysi</taxon>
        <taxon>Cypriniformes</taxon>
        <taxon>Danionidae</taxon>
        <taxon>Danioninae</taxon>
        <taxon>Danio</taxon>
    </lineage>
</organism>
<gene>
    <name type="primary">hoxa13a</name>
</gene>
<keyword id="KW-0217">Developmental protein</keyword>
<keyword id="KW-0238">DNA-binding</keyword>
<keyword id="KW-0371">Homeobox</keyword>
<keyword id="KW-0539">Nucleus</keyword>
<keyword id="KW-1185">Reference proteome</keyword>
<keyword id="KW-0804">Transcription</keyword>
<keyword id="KW-0805">Transcription regulation</keyword>
<proteinExistence type="inferred from homology"/>
<comment type="function">
    <text evidence="1">Sequence-specific transcription factor which is part of a developmental regulatory system that provides cells with specific positional identities on the anterior-posterior axis.</text>
</comment>
<comment type="subcellular location">
    <subcellularLocation>
        <location evidence="2">Nucleus</location>
    </subcellularLocation>
</comment>
<comment type="similarity">
    <text evidence="3">Belongs to the Abd-B homeobox family.</text>
</comment>